<feature type="chain" id="PRO_0000080378" description="G2/mitotic-specific cyclin-B">
    <location>
        <begin position="1"/>
        <end position="394"/>
    </location>
</feature>
<feature type="region of interest" description="Disordered" evidence="1">
    <location>
        <begin position="360"/>
        <end position="394"/>
    </location>
</feature>
<feature type="compositionally biased region" description="Polar residues" evidence="1">
    <location>
        <begin position="379"/>
        <end position="394"/>
    </location>
</feature>
<keyword id="KW-0131">Cell cycle</keyword>
<keyword id="KW-0132">Cell division</keyword>
<keyword id="KW-0195">Cyclin</keyword>
<keyword id="KW-0498">Mitosis</keyword>
<evidence type="ECO:0000256" key="1">
    <source>
        <dbReference type="SAM" id="MobiDB-lite"/>
    </source>
</evidence>
<evidence type="ECO:0000305" key="2"/>
<protein>
    <recommendedName>
        <fullName>G2/mitotic-specific cyclin-B</fullName>
    </recommendedName>
</protein>
<dbReference type="EMBL" id="M33880">
    <property type="protein sequence ID" value="AAA29994.1"/>
    <property type="status" value="ALT_FRAME"/>
    <property type="molecule type" value="mRNA"/>
</dbReference>
<dbReference type="PIR" id="A37350">
    <property type="entry name" value="A37350"/>
</dbReference>
<dbReference type="BindingDB" id="P18063"/>
<dbReference type="ChEMBL" id="CHEMBL2366468"/>
<dbReference type="GO" id="GO:0051301">
    <property type="term" value="P:cell division"/>
    <property type="evidence" value="ECO:0007669"/>
    <property type="project" value="UniProtKB-KW"/>
</dbReference>
<dbReference type="CDD" id="cd20507">
    <property type="entry name" value="CYCLIN_CCNB1-like_rpt1"/>
    <property type="match status" value="1"/>
</dbReference>
<dbReference type="CDD" id="cd20509">
    <property type="entry name" value="CYCLIN_CCNB1-like_rpt2"/>
    <property type="match status" value="1"/>
</dbReference>
<dbReference type="FunFam" id="1.10.472.10:FF:000198">
    <property type="entry name" value="G2/mitotic-specific cyclin-B1"/>
    <property type="match status" value="1"/>
</dbReference>
<dbReference type="Gene3D" id="1.10.472.10">
    <property type="entry name" value="Cyclin-like"/>
    <property type="match status" value="2"/>
</dbReference>
<dbReference type="InterPro" id="IPR039361">
    <property type="entry name" value="Cyclin"/>
</dbReference>
<dbReference type="InterPro" id="IPR013763">
    <property type="entry name" value="Cyclin-like_dom"/>
</dbReference>
<dbReference type="InterPro" id="IPR036915">
    <property type="entry name" value="Cyclin-like_sf"/>
</dbReference>
<dbReference type="InterPro" id="IPR004367">
    <property type="entry name" value="Cyclin_C-dom"/>
</dbReference>
<dbReference type="InterPro" id="IPR006671">
    <property type="entry name" value="Cyclin_N"/>
</dbReference>
<dbReference type="InterPro" id="IPR048258">
    <property type="entry name" value="Cyclins_cyclin-box"/>
</dbReference>
<dbReference type="PANTHER" id="PTHR10177">
    <property type="entry name" value="CYCLINS"/>
    <property type="match status" value="1"/>
</dbReference>
<dbReference type="Pfam" id="PF02984">
    <property type="entry name" value="Cyclin_C"/>
    <property type="match status" value="1"/>
</dbReference>
<dbReference type="Pfam" id="PF00134">
    <property type="entry name" value="Cyclin_N"/>
    <property type="match status" value="1"/>
</dbReference>
<dbReference type="SMART" id="SM00385">
    <property type="entry name" value="CYCLIN"/>
    <property type="match status" value="2"/>
</dbReference>
<dbReference type="SMART" id="SM01332">
    <property type="entry name" value="Cyclin_C"/>
    <property type="match status" value="1"/>
</dbReference>
<dbReference type="SUPFAM" id="SSF47954">
    <property type="entry name" value="Cyclin-like"/>
    <property type="match status" value="2"/>
</dbReference>
<dbReference type="PROSITE" id="PS00292">
    <property type="entry name" value="CYCLINS"/>
    <property type="match status" value="1"/>
</dbReference>
<organism>
    <name type="scientific">Patiria pectinifera</name>
    <name type="common">Starfish</name>
    <name type="synonym">Asterina pectinifera</name>
    <dbReference type="NCBI Taxonomy" id="7594"/>
    <lineage>
        <taxon>Eukaryota</taxon>
        <taxon>Metazoa</taxon>
        <taxon>Echinodermata</taxon>
        <taxon>Eleutherozoa</taxon>
        <taxon>Asterozoa</taxon>
        <taxon>Asteroidea</taxon>
        <taxon>Valvatacea</taxon>
        <taxon>Valvatida</taxon>
        <taxon>Asterinidae</taxon>
        <taxon>Patiria</taxon>
    </lineage>
</organism>
<reference key="1">
    <citation type="journal article" date="1990" name="Dev. Biol.">
        <title>The starfish egg mRNA responsible for meiosis reinitiation encodes cyclin.</title>
        <authorList>
            <person name="Tachibana K."/>
            <person name="Ishiura M."/>
            <person name="Uchida T."/>
            <person name="Kishimoto T."/>
        </authorList>
    </citation>
    <scope>NUCLEOTIDE SEQUENCE [MRNA]</scope>
</reference>
<reference key="2">
    <citation type="unpublished observations" date="1994-08">
        <authorList>
            <person name="Gibson T.J."/>
        </authorList>
    </citation>
    <scope>CONCEPTUAL TRANSLATION</scope>
</reference>
<comment type="function">
    <text>Essential for the control of the cell cycle at the G2/M (mitosis) transition.</text>
</comment>
<comment type="subunit">
    <text>Interacts with the CDK1 protein kinase to form a serine/threonine kinase holoenzyme complex also known as maturation promoting factor (MPF). The cyclin subunit imparts substrate specificity to the complex.</text>
</comment>
<comment type="developmental stage">
    <text>Accumulates steadily during G2 and is abruptly destroyed at mitosis.</text>
</comment>
<comment type="similarity">
    <text evidence="2">Belongs to the cyclin family. Cyclin AB subfamily.</text>
</comment>
<comment type="sequence caution" evidence="2">
    <conflict type="frameshift">
        <sequence resource="EMBL-CDS" id="AAA29994"/>
    </conflict>
</comment>
<name>CCNB_PATPE</name>
<sequence>MQTACSGNLCGYQLMFSLSTVVTVCRSLRSRNRHWFLKLLGVRLTIAMRCALENISNVAKNNVQAAAKKEIKQKRGMTKSKATSSLQSVIGLHVEPVEKVQSPEPMDMSEVSNALEAFSQNILEMGVDDIDKDDHENPQLCSEYVNDIYLYMRHLEREFKVRTDYMAMQEITERMRTILIDWLVQVHLRFHLLQETLFLTIQILDRYLEGASVSKTKLQLVGVTSMLIAAYEEMYAEIGDFVYITDNAYSKAQIRAMECNILRKLDFNLGKPLCIHFLRRCSKAGGVDGHKHTLSKYIMELTLXEYSFVKYDXEIAAAALLSTRFWDEDMEWTKSLVHYSAYSEGHLGPIVQKMAVLSQQSHPSPNSRLDQEEDMASSKFMSDQQATQELKSIR</sequence>
<accession>P18063</accession>
<proteinExistence type="evidence at transcript level"/>